<reference key="1">
    <citation type="journal article" date="2002" name="Plant Physiol.">
        <title>Inventory and functional characterization of the HAK potassium transporters of rice.</title>
        <authorList>
            <person name="Banuelos M.A."/>
            <person name="Garciadeblas B."/>
            <person name="Cubero B."/>
            <person name="Rodriguez-Navarro A."/>
        </authorList>
    </citation>
    <scope>NUCLEOTIDE SEQUENCE [GENOMIC DNA]</scope>
    <scope>NOMENCLATURE</scope>
    <source>
        <strain>cv. Nipponbare</strain>
    </source>
</reference>
<reference key="2">
    <citation type="journal article" date="2005" name="Nature">
        <title>The map-based sequence of the rice genome.</title>
        <authorList>
            <consortium name="International rice genome sequencing project (IRGSP)"/>
        </authorList>
    </citation>
    <scope>NUCLEOTIDE SEQUENCE [LARGE SCALE GENOMIC DNA]</scope>
    <source>
        <strain>cv. Nipponbare</strain>
    </source>
</reference>
<reference key="3">
    <citation type="journal article" date="2008" name="Nucleic Acids Res.">
        <title>The rice annotation project database (RAP-DB): 2008 update.</title>
        <authorList>
            <consortium name="The rice annotation project (RAP)"/>
        </authorList>
    </citation>
    <scope>GENOME REANNOTATION</scope>
    <source>
        <strain>cv. Nipponbare</strain>
    </source>
</reference>
<reference key="4">
    <citation type="journal article" date="2013" name="Rice">
        <title>Improvement of the Oryza sativa Nipponbare reference genome using next generation sequence and optical map data.</title>
        <authorList>
            <person name="Kawahara Y."/>
            <person name="de la Bastide M."/>
            <person name="Hamilton J.P."/>
            <person name="Kanamori H."/>
            <person name="McCombie W.R."/>
            <person name="Ouyang S."/>
            <person name="Schwartz D.C."/>
            <person name="Tanaka T."/>
            <person name="Wu J."/>
            <person name="Zhou S."/>
            <person name="Childs K.L."/>
            <person name="Davidson R.M."/>
            <person name="Lin H."/>
            <person name="Quesada-Ocampo L."/>
            <person name="Vaillancourt B."/>
            <person name="Sakai H."/>
            <person name="Lee S.S."/>
            <person name="Kim J."/>
            <person name="Numa H."/>
            <person name="Itoh T."/>
            <person name="Buell C.R."/>
            <person name="Matsumoto T."/>
        </authorList>
    </citation>
    <scope>GENOME REANNOTATION</scope>
    <source>
        <strain>cv. Nipponbare</strain>
    </source>
</reference>
<reference key="5">
    <citation type="journal article" date="2005" name="PLoS Biol.">
        <title>The genomes of Oryza sativa: a history of duplications.</title>
        <authorList>
            <person name="Yu J."/>
            <person name="Wang J."/>
            <person name="Lin W."/>
            <person name="Li S."/>
            <person name="Li H."/>
            <person name="Zhou J."/>
            <person name="Ni P."/>
            <person name="Dong W."/>
            <person name="Hu S."/>
            <person name="Zeng C."/>
            <person name="Zhang J."/>
            <person name="Zhang Y."/>
            <person name="Li R."/>
            <person name="Xu Z."/>
            <person name="Li S."/>
            <person name="Li X."/>
            <person name="Zheng H."/>
            <person name="Cong L."/>
            <person name="Lin L."/>
            <person name="Yin J."/>
            <person name="Geng J."/>
            <person name="Li G."/>
            <person name="Shi J."/>
            <person name="Liu J."/>
            <person name="Lv H."/>
            <person name="Li J."/>
            <person name="Wang J."/>
            <person name="Deng Y."/>
            <person name="Ran L."/>
            <person name="Shi X."/>
            <person name="Wang X."/>
            <person name="Wu Q."/>
            <person name="Li C."/>
            <person name="Ren X."/>
            <person name="Wang J."/>
            <person name="Wang X."/>
            <person name="Li D."/>
            <person name="Liu D."/>
            <person name="Zhang X."/>
            <person name="Ji Z."/>
            <person name="Zhao W."/>
            <person name="Sun Y."/>
            <person name="Zhang Z."/>
            <person name="Bao J."/>
            <person name="Han Y."/>
            <person name="Dong L."/>
            <person name="Ji J."/>
            <person name="Chen P."/>
            <person name="Wu S."/>
            <person name="Liu J."/>
            <person name="Xiao Y."/>
            <person name="Bu D."/>
            <person name="Tan J."/>
            <person name="Yang L."/>
            <person name="Ye C."/>
            <person name="Zhang J."/>
            <person name="Xu J."/>
            <person name="Zhou Y."/>
            <person name="Yu Y."/>
            <person name="Zhang B."/>
            <person name="Zhuang S."/>
            <person name="Wei H."/>
            <person name="Liu B."/>
            <person name="Lei M."/>
            <person name="Yu H."/>
            <person name="Li Y."/>
            <person name="Xu H."/>
            <person name="Wei S."/>
            <person name="He X."/>
            <person name="Fang L."/>
            <person name="Zhang Z."/>
            <person name="Zhang Y."/>
            <person name="Huang X."/>
            <person name="Su Z."/>
            <person name="Tong W."/>
            <person name="Li J."/>
            <person name="Tong Z."/>
            <person name="Li S."/>
            <person name="Ye J."/>
            <person name="Wang L."/>
            <person name="Fang L."/>
            <person name="Lei T."/>
            <person name="Chen C.-S."/>
            <person name="Chen H.-C."/>
            <person name="Xu Z."/>
            <person name="Li H."/>
            <person name="Huang H."/>
            <person name="Zhang F."/>
            <person name="Xu H."/>
            <person name="Li N."/>
            <person name="Zhao C."/>
            <person name="Li S."/>
            <person name="Dong L."/>
            <person name="Huang Y."/>
            <person name="Li L."/>
            <person name="Xi Y."/>
            <person name="Qi Q."/>
            <person name="Li W."/>
            <person name="Zhang B."/>
            <person name="Hu W."/>
            <person name="Zhang Y."/>
            <person name="Tian X."/>
            <person name="Jiao Y."/>
            <person name="Liang X."/>
            <person name="Jin J."/>
            <person name="Gao L."/>
            <person name="Zheng W."/>
            <person name="Hao B."/>
            <person name="Liu S.-M."/>
            <person name="Wang W."/>
            <person name="Yuan L."/>
            <person name="Cao M."/>
            <person name="McDermott J."/>
            <person name="Samudrala R."/>
            <person name="Wang J."/>
            <person name="Wong G.K.-S."/>
            <person name="Yang H."/>
        </authorList>
    </citation>
    <scope>NUCLEOTIDE SEQUENCE [LARGE SCALE GENOMIC DNA]</scope>
    <source>
        <strain>cv. Nipponbare</strain>
    </source>
</reference>
<reference key="6">
    <citation type="journal article" date="2003" name="Science">
        <title>Collection, mapping, and annotation of over 28,000 cDNA clones from japonica rice.</title>
        <authorList>
            <consortium name="The rice full-length cDNA consortium"/>
        </authorList>
    </citation>
    <scope>NUCLEOTIDE SEQUENCE [LARGE SCALE MRNA] (ISOFORM 2)</scope>
    <source>
        <strain>cv. Nipponbare</strain>
    </source>
</reference>
<reference key="7">
    <citation type="journal article" date="2009" name="J. Genet. Genomics">
        <title>Molecular evolution and functional divergence of HAK potassium transporter gene family in rice (Oryza sativa L.).</title>
        <authorList>
            <person name="Yang Z."/>
            <person name="Gao Q."/>
            <person name="Sun C."/>
            <person name="Li W."/>
            <person name="Gu S."/>
            <person name="Xu C."/>
        </authorList>
    </citation>
    <scope>GENE FAMILY</scope>
</reference>
<comment type="function">
    <text evidence="1">High-affinity potassium transporter.</text>
</comment>
<comment type="subcellular location">
    <subcellularLocation>
        <location evidence="4">Membrane</location>
        <topology evidence="4">Multi-pass membrane protein</topology>
    </subcellularLocation>
</comment>
<comment type="alternative products">
    <event type="alternative splicing"/>
    <isoform>
        <id>Q8VXB1-1</id>
        <name>1</name>
        <sequence type="displayed"/>
    </isoform>
    <isoform>
        <id>Q8VXB1-2</id>
        <name>2</name>
        <sequence type="described" ref="VSP_037673"/>
    </isoform>
</comment>
<comment type="similarity">
    <text evidence="4">Belongs to the HAK/KUP transporter (TC 2.A.72.3) family.</text>
</comment>
<comment type="sequence caution" evidence="4">
    <conflict type="erroneous gene model prediction">
        <sequence resource="EMBL-CDS" id="BAF23152"/>
    </conflict>
</comment>
<keyword id="KW-0025">Alternative splicing</keyword>
<keyword id="KW-0325">Glycoprotein</keyword>
<keyword id="KW-0406">Ion transport</keyword>
<keyword id="KW-0472">Membrane</keyword>
<keyword id="KW-0630">Potassium</keyword>
<keyword id="KW-0633">Potassium transport</keyword>
<keyword id="KW-1185">Reference proteome</keyword>
<keyword id="KW-0812">Transmembrane</keyword>
<keyword id="KW-1133">Transmembrane helix</keyword>
<keyword id="KW-0813">Transport</keyword>
<sequence>MASISDSETTNHGSIWDLDQNLDQPMDEEASRLKNMYTEKKFSSILLLRLAFQSLGVVFGDLGTSPLYVFYNIFPHGVDDDEDVIGALSLIIYTLTLIPLMKYVFVVLRANDNGQGGTFALYSLLCRHAKVSTIPNQHKTDEELTTYSRQTYEENSLAAKIKRWLEGHVYKKNCLLILVLIGTCTAIGDGILTPAISVLSASGGIRVQNQKMSTDVVVVVAVIILIGLFSMQHYGTDKVGWLFAPIVLLWFILIGTIGALNIHKYNSSVLKAYNPVYIYRYFRRGKSESWTSLGGIMLSITGTEALYADLCHFPVLAIQIAFTLVVFPCLLLAYTGQAAYIISNKDHVVDAFYRSIPDTIYWPVFIIATLAAIVASQATISATYSIIKQALALGCFPRVSVVHTSKKFLGQIYIPDINWVLMILCIAVTAGFKNQSQIGNAYGTAVVIVMLVTTFLMVPIMLLVWKSHWILVVIFIVLSLMVELPYFTACINKVDQGGWVPLVVATTCFIIMYVWHFCTVKRYEFEMHSKVSMAWILGLGPSLGLVRVPGIGFVYTELASGVPHIFSHFITNLPAIHSVVVFVCVKYLPVYTVPTEERFIVKRIGPKNFHMFRCVARYGYKDIHKRDDDFEKMLLDRLLLFVRLESMMDDYSDSEDFTMMEEKTQGSSNALLLTGKAGSNTMCSTGDLSYSSQDSIVPAKSPIRGNSLTRYSSQTFGDELEFLNLEFLNRCKDAGVVHILGNTVVHARPDSGIIKKVAVNYVFAFLRKICRENSVIFNVPHESLLNVGQIYYI</sequence>
<gene>
    <name type="primary">HAK12</name>
    <name type="ordered locus">Os08g0206400</name>
    <name type="ordered locus">LOC_Os08g10550</name>
    <name type="ORF">OsJ_26409</name>
</gene>
<organism>
    <name type="scientific">Oryza sativa subsp. japonica</name>
    <name type="common">Rice</name>
    <dbReference type="NCBI Taxonomy" id="39947"/>
    <lineage>
        <taxon>Eukaryota</taxon>
        <taxon>Viridiplantae</taxon>
        <taxon>Streptophyta</taxon>
        <taxon>Embryophyta</taxon>
        <taxon>Tracheophyta</taxon>
        <taxon>Spermatophyta</taxon>
        <taxon>Magnoliopsida</taxon>
        <taxon>Liliopsida</taxon>
        <taxon>Poales</taxon>
        <taxon>Poaceae</taxon>
        <taxon>BOP clade</taxon>
        <taxon>Oryzoideae</taxon>
        <taxon>Oryzeae</taxon>
        <taxon>Oryzinae</taxon>
        <taxon>Oryza</taxon>
        <taxon>Oryza sativa</taxon>
    </lineage>
</organism>
<feature type="chain" id="PRO_0000209099" description="Putative potassium transporter 12">
    <location>
        <begin position="1"/>
        <end position="793"/>
    </location>
</feature>
<feature type="topological domain" description="Cytoplasmic" evidence="2">
    <location>
        <begin position="1"/>
        <end position="54"/>
    </location>
</feature>
<feature type="transmembrane region" description="Helical; Name=1" evidence="2">
    <location>
        <begin position="55"/>
        <end position="75"/>
    </location>
</feature>
<feature type="topological domain" description="Extracellular" evidence="2">
    <location>
        <begin position="76"/>
        <end position="87"/>
    </location>
</feature>
<feature type="transmembrane region" description="Helical; Name=2" evidence="2">
    <location>
        <begin position="88"/>
        <end position="108"/>
    </location>
</feature>
<feature type="topological domain" description="Cytoplasmic" evidence="2">
    <location>
        <begin position="109"/>
        <end position="175"/>
    </location>
</feature>
<feature type="transmembrane region" description="Helical; Name=3" evidence="2">
    <location>
        <begin position="176"/>
        <end position="196"/>
    </location>
</feature>
<feature type="topological domain" description="Extracellular" evidence="2">
    <location>
        <begin position="197"/>
        <end position="215"/>
    </location>
</feature>
<feature type="transmembrane region" description="Helical; Name=4" evidence="2">
    <location>
        <begin position="216"/>
        <end position="236"/>
    </location>
</feature>
<feature type="topological domain" description="Cytoplasmic" evidence="2">
    <location>
        <begin position="237"/>
        <end position="238"/>
    </location>
</feature>
<feature type="transmembrane region" description="Helical; Name=5" evidence="2">
    <location>
        <begin position="239"/>
        <end position="259"/>
    </location>
</feature>
<feature type="topological domain" description="Extracellular" evidence="2">
    <location>
        <begin position="260"/>
        <end position="289"/>
    </location>
</feature>
<feature type="transmembrane region" description="Helical; Name=6" evidence="2">
    <location>
        <begin position="290"/>
        <end position="310"/>
    </location>
</feature>
<feature type="topological domain" description="Cytoplasmic" evidence="2">
    <location>
        <begin position="311"/>
        <end position="315"/>
    </location>
</feature>
<feature type="transmembrane region" description="Helical; Name=7" evidence="2">
    <location>
        <begin position="316"/>
        <end position="338"/>
    </location>
</feature>
<feature type="topological domain" description="Extracellular" evidence="2">
    <location>
        <begin position="339"/>
        <end position="359"/>
    </location>
</feature>
<feature type="transmembrane region" description="Helical; Name=8" evidence="2">
    <location>
        <begin position="360"/>
        <end position="380"/>
    </location>
</feature>
<feature type="topological domain" description="Cytoplasmic" evidence="2">
    <location>
        <begin position="381"/>
        <end position="411"/>
    </location>
</feature>
<feature type="transmembrane region" description="Helical; Name=9" evidence="2">
    <location>
        <begin position="412"/>
        <end position="432"/>
    </location>
</feature>
<feature type="topological domain" description="Extracellular" evidence="2">
    <location>
        <begin position="433"/>
        <end position="444"/>
    </location>
</feature>
<feature type="transmembrane region" description="Helical; Name=10" evidence="2">
    <location>
        <begin position="445"/>
        <end position="465"/>
    </location>
</feature>
<feature type="topological domain" description="Cytoplasmic" evidence="2">
    <location>
        <begin position="466"/>
        <end position="468"/>
    </location>
</feature>
<feature type="transmembrane region" description="Helical; Name=11" evidence="2">
    <location>
        <begin position="469"/>
        <end position="489"/>
    </location>
</feature>
<feature type="topological domain" description="Extracellular" evidence="2">
    <location>
        <begin position="490"/>
        <end position="496"/>
    </location>
</feature>
<feature type="transmembrane region" description="Helical; Name=12" evidence="2">
    <location>
        <begin position="497"/>
        <end position="517"/>
    </location>
</feature>
<feature type="topological domain" description="Cytoplasmic" evidence="2">
    <location>
        <begin position="518"/>
        <end position="793"/>
    </location>
</feature>
<feature type="glycosylation site" description="N-linked (GlcNAc...) asparagine" evidence="2">
    <location>
        <position position="266"/>
    </location>
</feature>
<feature type="glycosylation site" description="N-linked (GlcNAc...) asparagine" evidence="2">
    <location>
        <position position="434"/>
    </location>
</feature>
<feature type="splice variant" id="VSP_037673" description="In isoform 2." evidence="3">
    <location>
        <begin position="1"/>
        <end position="211"/>
    </location>
</feature>
<proteinExistence type="evidence at transcript level"/>
<protein>
    <recommendedName>
        <fullName>Putative potassium transporter 12</fullName>
    </recommendedName>
    <alternativeName>
        <fullName>OsHAK12</fullName>
    </alternativeName>
</protein>
<dbReference type="EMBL" id="AJ427981">
    <property type="protein sequence ID" value="CAD21002.1"/>
    <property type="molecule type" value="Genomic_DNA"/>
</dbReference>
<dbReference type="EMBL" id="AP003875">
    <property type="status" value="NOT_ANNOTATED_CDS"/>
    <property type="molecule type" value="Genomic_DNA"/>
</dbReference>
<dbReference type="EMBL" id="AP008214">
    <property type="protein sequence ID" value="BAF23152.1"/>
    <property type="status" value="ALT_SEQ"/>
    <property type="molecule type" value="Genomic_DNA"/>
</dbReference>
<dbReference type="EMBL" id="AP014964">
    <property type="status" value="NOT_ANNOTATED_CDS"/>
    <property type="molecule type" value="Genomic_DNA"/>
</dbReference>
<dbReference type="EMBL" id="CM000145">
    <property type="protein sequence ID" value="EAZ41864.1"/>
    <property type="molecule type" value="Genomic_DNA"/>
</dbReference>
<dbReference type="EMBL" id="AK069377">
    <property type="protein sequence ID" value="BAG91406.1"/>
    <property type="molecule type" value="mRNA"/>
</dbReference>
<dbReference type="RefSeq" id="XP_015650350.1">
    <property type="nucleotide sequence ID" value="XM_015794864.1"/>
</dbReference>
<dbReference type="FunCoup" id="Q8VXB1">
    <property type="interactions" value="185"/>
</dbReference>
<dbReference type="STRING" id="39947.Q8VXB1"/>
<dbReference type="GlyCosmos" id="Q8VXB1">
    <property type="glycosylation" value="2 sites, No reported glycans"/>
</dbReference>
<dbReference type="PaxDb" id="39947-Q8VXB1"/>
<dbReference type="InParanoid" id="Q8VXB1"/>
<dbReference type="OrthoDB" id="504708at2759"/>
<dbReference type="Proteomes" id="UP000000763">
    <property type="component" value="Chromosome 8"/>
</dbReference>
<dbReference type="Proteomes" id="UP000007752">
    <property type="component" value="Chromosome 8"/>
</dbReference>
<dbReference type="Proteomes" id="UP000059680">
    <property type="component" value="Chromosome 8"/>
</dbReference>
<dbReference type="GO" id="GO:0016020">
    <property type="term" value="C:membrane"/>
    <property type="evidence" value="ECO:0000318"/>
    <property type="project" value="GO_Central"/>
</dbReference>
<dbReference type="GO" id="GO:0015079">
    <property type="term" value="F:potassium ion transmembrane transporter activity"/>
    <property type="evidence" value="ECO:0000318"/>
    <property type="project" value="GO_Central"/>
</dbReference>
<dbReference type="GO" id="GO:0006813">
    <property type="term" value="P:potassium ion transport"/>
    <property type="evidence" value="ECO:0000318"/>
    <property type="project" value="GO_Central"/>
</dbReference>
<dbReference type="InterPro" id="IPR003855">
    <property type="entry name" value="K+_transporter"/>
</dbReference>
<dbReference type="InterPro" id="IPR053952">
    <property type="entry name" value="K_trans_C"/>
</dbReference>
<dbReference type="InterPro" id="IPR053951">
    <property type="entry name" value="K_trans_N"/>
</dbReference>
<dbReference type="NCBIfam" id="TIGR00794">
    <property type="entry name" value="kup"/>
    <property type="match status" value="1"/>
</dbReference>
<dbReference type="PANTHER" id="PTHR30540">
    <property type="entry name" value="OSMOTIC STRESS POTASSIUM TRANSPORTER"/>
    <property type="match status" value="1"/>
</dbReference>
<dbReference type="PANTHER" id="PTHR30540:SF93">
    <property type="entry name" value="POTASSIUM TRANSPORTER 12-RELATED"/>
    <property type="match status" value="1"/>
</dbReference>
<dbReference type="Pfam" id="PF02705">
    <property type="entry name" value="K_trans"/>
    <property type="match status" value="1"/>
</dbReference>
<dbReference type="Pfam" id="PF22776">
    <property type="entry name" value="K_trans_C"/>
    <property type="match status" value="1"/>
</dbReference>
<name>HAK12_ORYSJ</name>
<evidence type="ECO:0000250" key="1"/>
<evidence type="ECO:0000255" key="2"/>
<evidence type="ECO:0000303" key="3">
    <source>
    </source>
</evidence>
<evidence type="ECO:0000305" key="4"/>
<accession>Q8VXB1</accession>
<accession>A3BQM5</accession>
<accession>B7EGA9</accession>
<accession>Q0J7B3</accession>